<feature type="chain" id="PRO_0000255263" description="Transmembrane protein 17A">
    <location>
        <begin position="1"/>
        <end position="219"/>
    </location>
</feature>
<feature type="transmembrane region" description="Helical" evidence="2">
    <location>
        <begin position="56"/>
        <end position="76"/>
    </location>
</feature>
<feature type="transmembrane region" description="Helical" evidence="2">
    <location>
        <begin position="83"/>
        <end position="103"/>
    </location>
</feature>
<feature type="transmembrane region" description="Helical" evidence="2">
    <location>
        <begin position="121"/>
        <end position="141"/>
    </location>
</feature>
<feature type="transmembrane region" description="Helical" evidence="2">
    <location>
        <begin position="153"/>
        <end position="173"/>
    </location>
</feature>
<feature type="glycosylation site" description="N-linked (GlcNAc...) asparagine" evidence="2">
    <location>
        <position position="18"/>
    </location>
</feature>
<feature type="glycosylation site" description="N-linked (GlcNAc...) asparagine" evidence="2">
    <location>
        <position position="27"/>
    </location>
</feature>
<feature type="sequence conflict" description="In Ref. 2; AAH95738." evidence="3" ref="2">
    <original>V</original>
    <variation>M</variation>
    <location>
        <position position="85"/>
    </location>
</feature>
<comment type="function">
    <text evidence="1">Transmembrane component of the tectonic-like complex, a complex localized at the transition zone of primary cilia and acting as a barrier that prevents diffusion of transmembrane proteins between the cilia and plasma membranes. Required for ciliogenesis and sonic hedgehog/SHH signaling (By similarity).</text>
</comment>
<comment type="subunit">
    <text evidence="1">Part of the tectonic-like complex (also named B9 complex).</text>
</comment>
<comment type="subcellular location">
    <subcellularLocation>
        <location evidence="1">Cell projection</location>
        <location evidence="1">Cilium membrane</location>
        <topology evidence="1">Multi-pass membrane protein</topology>
    </subcellularLocation>
    <text evidence="1">Localizes to the transition zone of primary cilia.</text>
</comment>
<comment type="similarity">
    <text evidence="3">Belongs to the TMEM17 family.</text>
</comment>
<accession>Q502E0</accession>
<accession>F1QCF1</accession>
<name>TM17A_DANRE</name>
<evidence type="ECO:0000250" key="1"/>
<evidence type="ECO:0000255" key="2"/>
<evidence type="ECO:0000305" key="3"/>
<sequence length="219" mass="25287">MPVFYTPIPQNLRVGLANVSGSVFINNRTRDSADFKDHYLENEACAEVSSHLPLQMMLYFNMFFFPFWWISELLMLQLKFSYLPVYYQCLLVTGMVLISIFEVLRMYLGYAGNLKEKVPELAGFWLISFLFQLPILLFFITDPDIIILPLERAVHSLYLAFLLGELMASFLALRVMTRKLAQQFHMRQFGHVQGLHTAEALPMFGLPYGGRSVLPVQDI</sequence>
<proteinExistence type="evidence at transcript level"/>
<reference key="1">
    <citation type="journal article" date="2013" name="Nature">
        <title>The zebrafish reference genome sequence and its relationship to the human genome.</title>
        <authorList>
            <person name="Howe K."/>
            <person name="Clark M.D."/>
            <person name="Torroja C.F."/>
            <person name="Torrance J."/>
            <person name="Berthelot C."/>
            <person name="Muffato M."/>
            <person name="Collins J.E."/>
            <person name="Humphray S."/>
            <person name="McLaren K."/>
            <person name="Matthews L."/>
            <person name="McLaren S."/>
            <person name="Sealy I."/>
            <person name="Caccamo M."/>
            <person name="Churcher C."/>
            <person name="Scott C."/>
            <person name="Barrett J.C."/>
            <person name="Koch R."/>
            <person name="Rauch G.J."/>
            <person name="White S."/>
            <person name="Chow W."/>
            <person name="Kilian B."/>
            <person name="Quintais L.T."/>
            <person name="Guerra-Assuncao J.A."/>
            <person name="Zhou Y."/>
            <person name="Gu Y."/>
            <person name="Yen J."/>
            <person name="Vogel J.H."/>
            <person name="Eyre T."/>
            <person name="Redmond S."/>
            <person name="Banerjee R."/>
            <person name="Chi J."/>
            <person name="Fu B."/>
            <person name="Langley E."/>
            <person name="Maguire S.F."/>
            <person name="Laird G.K."/>
            <person name="Lloyd D."/>
            <person name="Kenyon E."/>
            <person name="Donaldson S."/>
            <person name="Sehra H."/>
            <person name="Almeida-King J."/>
            <person name="Loveland J."/>
            <person name="Trevanion S."/>
            <person name="Jones M."/>
            <person name="Quail M."/>
            <person name="Willey D."/>
            <person name="Hunt A."/>
            <person name="Burton J."/>
            <person name="Sims S."/>
            <person name="McLay K."/>
            <person name="Plumb B."/>
            <person name="Davis J."/>
            <person name="Clee C."/>
            <person name="Oliver K."/>
            <person name="Clark R."/>
            <person name="Riddle C."/>
            <person name="Elliot D."/>
            <person name="Threadgold G."/>
            <person name="Harden G."/>
            <person name="Ware D."/>
            <person name="Begum S."/>
            <person name="Mortimore B."/>
            <person name="Kerry G."/>
            <person name="Heath P."/>
            <person name="Phillimore B."/>
            <person name="Tracey A."/>
            <person name="Corby N."/>
            <person name="Dunn M."/>
            <person name="Johnson C."/>
            <person name="Wood J."/>
            <person name="Clark S."/>
            <person name="Pelan S."/>
            <person name="Griffiths G."/>
            <person name="Smith M."/>
            <person name="Glithero R."/>
            <person name="Howden P."/>
            <person name="Barker N."/>
            <person name="Lloyd C."/>
            <person name="Stevens C."/>
            <person name="Harley J."/>
            <person name="Holt K."/>
            <person name="Panagiotidis G."/>
            <person name="Lovell J."/>
            <person name="Beasley H."/>
            <person name="Henderson C."/>
            <person name="Gordon D."/>
            <person name="Auger K."/>
            <person name="Wright D."/>
            <person name="Collins J."/>
            <person name="Raisen C."/>
            <person name="Dyer L."/>
            <person name="Leung K."/>
            <person name="Robertson L."/>
            <person name="Ambridge K."/>
            <person name="Leongamornlert D."/>
            <person name="McGuire S."/>
            <person name="Gilderthorp R."/>
            <person name="Griffiths C."/>
            <person name="Manthravadi D."/>
            <person name="Nichol S."/>
            <person name="Barker G."/>
            <person name="Whitehead S."/>
            <person name="Kay M."/>
            <person name="Brown J."/>
            <person name="Murnane C."/>
            <person name="Gray E."/>
            <person name="Humphries M."/>
            <person name="Sycamore N."/>
            <person name="Barker D."/>
            <person name="Saunders D."/>
            <person name="Wallis J."/>
            <person name="Babbage A."/>
            <person name="Hammond S."/>
            <person name="Mashreghi-Mohammadi M."/>
            <person name="Barr L."/>
            <person name="Martin S."/>
            <person name="Wray P."/>
            <person name="Ellington A."/>
            <person name="Matthews N."/>
            <person name="Ellwood M."/>
            <person name="Woodmansey R."/>
            <person name="Clark G."/>
            <person name="Cooper J."/>
            <person name="Tromans A."/>
            <person name="Grafham D."/>
            <person name="Skuce C."/>
            <person name="Pandian R."/>
            <person name="Andrews R."/>
            <person name="Harrison E."/>
            <person name="Kimberley A."/>
            <person name="Garnett J."/>
            <person name="Fosker N."/>
            <person name="Hall R."/>
            <person name="Garner P."/>
            <person name="Kelly D."/>
            <person name="Bird C."/>
            <person name="Palmer S."/>
            <person name="Gehring I."/>
            <person name="Berger A."/>
            <person name="Dooley C.M."/>
            <person name="Ersan-Urun Z."/>
            <person name="Eser C."/>
            <person name="Geiger H."/>
            <person name="Geisler M."/>
            <person name="Karotki L."/>
            <person name="Kirn A."/>
            <person name="Konantz J."/>
            <person name="Konantz M."/>
            <person name="Oberlander M."/>
            <person name="Rudolph-Geiger S."/>
            <person name="Teucke M."/>
            <person name="Lanz C."/>
            <person name="Raddatz G."/>
            <person name="Osoegawa K."/>
            <person name="Zhu B."/>
            <person name="Rapp A."/>
            <person name="Widaa S."/>
            <person name="Langford C."/>
            <person name="Yang F."/>
            <person name="Schuster S.C."/>
            <person name="Carter N.P."/>
            <person name="Harrow J."/>
            <person name="Ning Z."/>
            <person name="Herrero J."/>
            <person name="Searle S.M."/>
            <person name="Enright A."/>
            <person name="Geisler R."/>
            <person name="Plasterk R.H."/>
            <person name="Lee C."/>
            <person name="Westerfield M."/>
            <person name="de Jong P.J."/>
            <person name="Zon L.I."/>
            <person name="Postlethwait J.H."/>
            <person name="Nusslein-Volhard C."/>
            <person name="Hubbard T.J."/>
            <person name="Roest Crollius H."/>
            <person name="Rogers J."/>
            <person name="Stemple D.L."/>
        </authorList>
    </citation>
    <scope>NUCLEOTIDE SEQUENCE [LARGE SCALE GENOMIC DNA]</scope>
    <source>
        <strain>Tuebingen</strain>
    </source>
</reference>
<reference key="2">
    <citation type="submission" date="2005-05" db="EMBL/GenBank/DDBJ databases">
        <authorList>
            <consortium name="NIH - Zebrafish Gene Collection (ZGC) project"/>
        </authorList>
    </citation>
    <scope>NUCLEOTIDE SEQUENCE [LARGE SCALE MRNA]</scope>
    <source>
        <tissue>Larva</tissue>
    </source>
</reference>
<protein>
    <recommendedName>
        <fullName>Transmembrane protein 17A</fullName>
    </recommendedName>
</protein>
<keyword id="KW-1003">Cell membrane</keyword>
<keyword id="KW-0966">Cell projection</keyword>
<keyword id="KW-0969">Cilium</keyword>
<keyword id="KW-0970">Cilium biogenesis/degradation</keyword>
<keyword id="KW-0325">Glycoprotein</keyword>
<keyword id="KW-0472">Membrane</keyword>
<keyword id="KW-1185">Reference proteome</keyword>
<keyword id="KW-0812">Transmembrane</keyword>
<keyword id="KW-1133">Transmembrane helix</keyword>
<gene>
    <name type="primary">tmem17a</name>
    <name type="ORF">zgc:112294</name>
</gene>
<organism>
    <name type="scientific">Danio rerio</name>
    <name type="common">Zebrafish</name>
    <name type="synonym">Brachydanio rerio</name>
    <dbReference type="NCBI Taxonomy" id="7955"/>
    <lineage>
        <taxon>Eukaryota</taxon>
        <taxon>Metazoa</taxon>
        <taxon>Chordata</taxon>
        <taxon>Craniata</taxon>
        <taxon>Vertebrata</taxon>
        <taxon>Euteleostomi</taxon>
        <taxon>Actinopterygii</taxon>
        <taxon>Neopterygii</taxon>
        <taxon>Teleostei</taxon>
        <taxon>Ostariophysi</taxon>
        <taxon>Cypriniformes</taxon>
        <taxon>Danionidae</taxon>
        <taxon>Danioninae</taxon>
        <taxon>Danio</taxon>
    </lineage>
</organism>
<dbReference type="EMBL" id="CABZ01077128">
    <property type="status" value="NOT_ANNOTATED_CDS"/>
    <property type="molecule type" value="Genomic_DNA"/>
</dbReference>
<dbReference type="EMBL" id="BC095738">
    <property type="protein sequence ID" value="AAH95738.1"/>
    <property type="molecule type" value="mRNA"/>
</dbReference>
<dbReference type="RefSeq" id="NP_001018513.1">
    <property type="nucleotide sequence ID" value="NM_001020677.1"/>
</dbReference>
<dbReference type="FunCoup" id="Q502E0">
    <property type="interactions" value="1"/>
</dbReference>
<dbReference type="STRING" id="7955.ENSDARP00000012556"/>
<dbReference type="GlyCosmos" id="Q502E0">
    <property type="glycosylation" value="2 sites, No reported glycans"/>
</dbReference>
<dbReference type="PaxDb" id="7955-ENSDARP00000012556"/>
<dbReference type="GeneID" id="553704"/>
<dbReference type="KEGG" id="dre:553704"/>
<dbReference type="AGR" id="ZFIN:ZDB-GENE-050522-418"/>
<dbReference type="ZFIN" id="ZDB-GENE-050522-418">
    <property type="gene designation" value="zgc:112294"/>
</dbReference>
<dbReference type="eggNOG" id="KOG4694">
    <property type="taxonomic scope" value="Eukaryota"/>
</dbReference>
<dbReference type="InParanoid" id="Q502E0"/>
<dbReference type="OMA" id="FINNKTW"/>
<dbReference type="OrthoDB" id="311720at2759"/>
<dbReference type="PRO" id="PR:Q502E0"/>
<dbReference type="Proteomes" id="UP000000437">
    <property type="component" value="Chromosome 5"/>
</dbReference>
<dbReference type="GO" id="GO:0060170">
    <property type="term" value="C:ciliary membrane"/>
    <property type="evidence" value="ECO:0000250"/>
    <property type="project" value="UniProtKB"/>
</dbReference>
<dbReference type="GO" id="GO:0035869">
    <property type="term" value="C:ciliary transition zone"/>
    <property type="evidence" value="ECO:0000250"/>
    <property type="project" value="UniProtKB"/>
</dbReference>
<dbReference type="GO" id="GO:0036038">
    <property type="term" value="C:MKS complex"/>
    <property type="evidence" value="ECO:0000250"/>
    <property type="project" value="UniProtKB"/>
</dbReference>
<dbReference type="GO" id="GO:0060271">
    <property type="term" value="P:cilium assembly"/>
    <property type="evidence" value="ECO:0000250"/>
    <property type="project" value="UniProtKB"/>
</dbReference>
<dbReference type="GO" id="GO:1905515">
    <property type="term" value="P:non-motile cilium assembly"/>
    <property type="evidence" value="ECO:0000318"/>
    <property type="project" value="GO_Central"/>
</dbReference>
<dbReference type="GO" id="GO:0007224">
    <property type="term" value="P:smoothened signaling pathway"/>
    <property type="evidence" value="ECO:0000250"/>
    <property type="project" value="UniProtKB"/>
</dbReference>
<dbReference type="InterPro" id="IPR019184">
    <property type="entry name" value="Uncharacterised_TM-17"/>
</dbReference>
<dbReference type="PANTHER" id="PTHR13531">
    <property type="entry name" value="GEO07735P1-RELATED-RELATED"/>
    <property type="match status" value="1"/>
</dbReference>
<dbReference type="PANTHER" id="PTHR13531:SF4">
    <property type="entry name" value="TRANSMEMBRANE PROTEIN 17B"/>
    <property type="match status" value="1"/>
</dbReference>
<dbReference type="Pfam" id="PF09799">
    <property type="entry name" value="Transmemb_17"/>
    <property type="match status" value="1"/>
</dbReference>